<sequence>MSNRVSTGKMAMAPQESVQPAVLYKLVLFALLMAVVPIGTYFSTLNYLWDGSTTFAAISAIAAANLILVGYVVVAFREDAASRTGPLPEKKTS</sequence>
<proteinExistence type="inferred from homology"/>
<evidence type="ECO:0000255" key="1">
    <source>
        <dbReference type="HAMAP-Rule" id="MF_03058"/>
    </source>
</evidence>
<feature type="chain" id="PRO_0000377586" description="Vacuolar ATPase assembly integral membrane protein VMA21">
    <location>
        <begin position="1"/>
        <end position="93"/>
    </location>
</feature>
<feature type="topological domain" description="Cytoplasmic" evidence="1">
    <location>
        <begin position="1"/>
        <end position="21"/>
    </location>
</feature>
<feature type="transmembrane region" description="Helical" evidence="1">
    <location>
        <begin position="22"/>
        <end position="42"/>
    </location>
</feature>
<feature type="topological domain" description="Lumenal" evidence="1">
    <location>
        <begin position="43"/>
        <end position="54"/>
    </location>
</feature>
<feature type="transmembrane region" description="Helical" evidence="1">
    <location>
        <begin position="55"/>
        <end position="75"/>
    </location>
</feature>
<feature type="topological domain" description="Cytoplasmic" evidence="1">
    <location>
        <begin position="76"/>
        <end position="93"/>
    </location>
</feature>
<feature type="short sequence motif" description="Prevents secretion from ER">
    <location>
        <begin position="90"/>
        <end position="93"/>
    </location>
</feature>
<name>VMA21_CRYNJ</name>
<dbReference type="EMBL" id="AE017351">
    <property type="protein sequence ID" value="AAW46093.2"/>
    <property type="molecule type" value="Genomic_DNA"/>
</dbReference>
<dbReference type="RefSeq" id="XP_567610.1">
    <property type="nucleotide sequence ID" value="XM_567610.1"/>
</dbReference>
<dbReference type="SMR" id="P0CS24"/>
<dbReference type="FunCoup" id="P0CS24">
    <property type="interactions" value="67"/>
</dbReference>
<dbReference type="STRING" id="214684.P0CS24"/>
<dbReference type="PaxDb" id="214684-P0CS24"/>
<dbReference type="eggNOG" id="ENOG502SBNA">
    <property type="taxonomic scope" value="Eukaryota"/>
</dbReference>
<dbReference type="HOGENOM" id="CLU_154717_0_0_1"/>
<dbReference type="InParanoid" id="P0CS24"/>
<dbReference type="Proteomes" id="UP000002149">
    <property type="component" value="Chromosome 11"/>
</dbReference>
<dbReference type="GO" id="GO:0005789">
    <property type="term" value="C:endoplasmic reticulum membrane"/>
    <property type="evidence" value="ECO:0000318"/>
    <property type="project" value="GO_Central"/>
</dbReference>
<dbReference type="GO" id="GO:0033116">
    <property type="term" value="C:endoplasmic reticulum-Golgi intermediate compartment membrane"/>
    <property type="evidence" value="ECO:0007669"/>
    <property type="project" value="UniProtKB-SubCell"/>
</dbReference>
<dbReference type="GO" id="GO:0012507">
    <property type="term" value="C:ER to Golgi transport vesicle membrane"/>
    <property type="evidence" value="ECO:0007669"/>
    <property type="project" value="UniProtKB-SubCell"/>
</dbReference>
<dbReference type="GO" id="GO:0070072">
    <property type="term" value="P:vacuolar proton-transporting V-type ATPase complex assembly"/>
    <property type="evidence" value="ECO:0000318"/>
    <property type="project" value="GO_Central"/>
</dbReference>
<dbReference type="HAMAP" id="MF_03058">
    <property type="entry name" value="VMA21"/>
    <property type="match status" value="1"/>
</dbReference>
<dbReference type="InterPro" id="IPR019013">
    <property type="entry name" value="Vma21"/>
</dbReference>
<dbReference type="PANTHER" id="PTHR31792">
    <property type="entry name" value="VACUOLAR ATPASE ASSEMBLY INTEGRAL MEMBRANE PROTEIN VMA21"/>
    <property type="match status" value="1"/>
</dbReference>
<dbReference type="PANTHER" id="PTHR31792:SF3">
    <property type="entry name" value="VACUOLAR ATPASE ASSEMBLY INTEGRAL MEMBRANE PROTEIN VMA21"/>
    <property type="match status" value="1"/>
</dbReference>
<dbReference type="Pfam" id="PF09446">
    <property type="entry name" value="VMA21"/>
    <property type="match status" value="1"/>
</dbReference>
<gene>
    <name evidence="1" type="primary">VMA21</name>
    <name type="ordered locus">CNK00410</name>
</gene>
<protein>
    <recommendedName>
        <fullName evidence="1">Vacuolar ATPase assembly integral membrane protein VMA21</fullName>
    </recommendedName>
</protein>
<organism>
    <name type="scientific">Cryptococcus neoformans var. neoformans serotype D (strain JEC21 / ATCC MYA-565)</name>
    <name type="common">Filobasidiella neoformans</name>
    <dbReference type="NCBI Taxonomy" id="214684"/>
    <lineage>
        <taxon>Eukaryota</taxon>
        <taxon>Fungi</taxon>
        <taxon>Dikarya</taxon>
        <taxon>Basidiomycota</taxon>
        <taxon>Agaricomycotina</taxon>
        <taxon>Tremellomycetes</taxon>
        <taxon>Tremellales</taxon>
        <taxon>Cryptococcaceae</taxon>
        <taxon>Cryptococcus</taxon>
        <taxon>Cryptococcus neoformans species complex</taxon>
    </lineage>
</organism>
<keyword id="KW-0968">Cytoplasmic vesicle</keyword>
<keyword id="KW-0256">Endoplasmic reticulum</keyword>
<keyword id="KW-0472">Membrane</keyword>
<keyword id="KW-1185">Reference proteome</keyword>
<keyword id="KW-0812">Transmembrane</keyword>
<keyword id="KW-1133">Transmembrane helix</keyword>
<reference key="1">
    <citation type="journal article" date="2005" name="Science">
        <title>The genome of the basidiomycetous yeast and human pathogen Cryptococcus neoformans.</title>
        <authorList>
            <person name="Loftus B.J."/>
            <person name="Fung E."/>
            <person name="Roncaglia P."/>
            <person name="Rowley D."/>
            <person name="Amedeo P."/>
            <person name="Bruno D."/>
            <person name="Vamathevan J."/>
            <person name="Miranda M."/>
            <person name="Anderson I.J."/>
            <person name="Fraser J.A."/>
            <person name="Allen J.E."/>
            <person name="Bosdet I.E."/>
            <person name="Brent M.R."/>
            <person name="Chiu R."/>
            <person name="Doering T.L."/>
            <person name="Donlin M.J."/>
            <person name="D'Souza C.A."/>
            <person name="Fox D.S."/>
            <person name="Grinberg V."/>
            <person name="Fu J."/>
            <person name="Fukushima M."/>
            <person name="Haas B.J."/>
            <person name="Huang J.C."/>
            <person name="Janbon G."/>
            <person name="Jones S.J.M."/>
            <person name="Koo H.L."/>
            <person name="Krzywinski M.I."/>
            <person name="Kwon-Chung K.J."/>
            <person name="Lengeler K.B."/>
            <person name="Maiti R."/>
            <person name="Marra M.A."/>
            <person name="Marra R.E."/>
            <person name="Mathewson C.A."/>
            <person name="Mitchell T.G."/>
            <person name="Pertea M."/>
            <person name="Riggs F.R."/>
            <person name="Salzberg S.L."/>
            <person name="Schein J.E."/>
            <person name="Shvartsbeyn A."/>
            <person name="Shin H."/>
            <person name="Shumway M."/>
            <person name="Specht C.A."/>
            <person name="Suh B.B."/>
            <person name="Tenney A."/>
            <person name="Utterback T.R."/>
            <person name="Wickes B.L."/>
            <person name="Wortman J.R."/>
            <person name="Wye N.H."/>
            <person name="Kronstad J.W."/>
            <person name="Lodge J.K."/>
            <person name="Heitman J."/>
            <person name="Davis R.W."/>
            <person name="Fraser C.M."/>
            <person name="Hyman R.W."/>
        </authorList>
    </citation>
    <scope>NUCLEOTIDE SEQUENCE [LARGE SCALE GENOMIC DNA]</scope>
    <source>
        <strain>JEC21 / ATCC MYA-565</strain>
    </source>
</reference>
<comment type="function">
    <text evidence="1">Required for the assembly of the V0 complex of the vacuolar ATPase (V-ATPase) in the endoplasmic reticulum.</text>
</comment>
<comment type="subcellular location">
    <subcellularLocation>
        <location evidence="1">Endoplasmic reticulum membrane</location>
        <topology evidence="1">Multi-pass membrane protein</topology>
    </subcellularLocation>
    <subcellularLocation>
        <location evidence="1">Endoplasmic reticulum-Golgi intermediate compartment membrane</location>
        <topology evidence="1">Multi-pass membrane protein</topology>
    </subcellularLocation>
    <subcellularLocation>
        <location evidence="1">Cytoplasmic vesicle</location>
        <location evidence="1">COPII-coated vesicle membrane</location>
        <topology evidence="1">Multi-pass membrane protein</topology>
    </subcellularLocation>
</comment>
<comment type="similarity">
    <text evidence="1">Belongs to the VMA21 family.</text>
</comment>
<accession>P0CS24</accession>
<accession>Q55JN0</accession>
<accession>Q5K9X1</accession>